<organism>
    <name type="scientific">Staphylococcus aureus (strain USA300)</name>
    <dbReference type="NCBI Taxonomy" id="367830"/>
    <lineage>
        <taxon>Bacteria</taxon>
        <taxon>Bacillati</taxon>
        <taxon>Bacillota</taxon>
        <taxon>Bacilli</taxon>
        <taxon>Bacillales</taxon>
        <taxon>Staphylococcaceae</taxon>
        <taxon>Staphylococcus</taxon>
    </lineage>
</organism>
<feature type="chain" id="PRO_1000007365" description="Large ribosomal subunit protein bL28">
    <location>
        <begin position="1"/>
        <end position="62"/>
    </location>
</feature>
<feature type="region of interest" description="Disordered" evidence="2">
    <location>
        <begin position="1"/>
        <end position="22"/>
    </location>
</feature>
<evidence type="ECO:0000255" key="1">
    <source>
        <dbReference type="HAMAP-Rule" id="MF_00373"/>
    </source>
</evidence>
<evidence type="ECO:0000256" key="2">
    <source>
        <dbReference type="SAM" id="MobiDB-lite"/>
    </source>
</evidence>
<evidence type="ECO:0000305" key="3"/>
<sequence length="62" mass="6977">MGKQCFVTGRKASTGNRRSHALNSTKRRWNANLQKVRILVDGKPKKVWVSARALKSGKVTRV</sequence>
<proteinExistence type="inferred from homology"/>
<name>RL28_STAA3</name>
<keyword id="KW-0687">Ribonucleoprotein</keyword>
<keyword id="KW-0689">Ribosomal protein</keyword>
<dbReference type="EMBL" id="CP000255">
    <property type="protein sequence ID" value="ABD21181.1"/>
    <property type="molecule type" value="Genomic_DNA"/>
</dbReference>
<dbReference type="RefSeq" id="WP_000517908.1">
    <property type="nucleotide sequence ID" value="NZ_CP027476.1"/>
</dbReference>
<dbReference type="SMR" id="Q2FHL4"/>
<dbReference type="GeneID" id="98345539"/>
<dbReference type="KEGG" id="saa:SAUSA300_1117"/>
<dbReference type="HOGENOM" id="CLU_064548_7_1_9"/>
<dbReference type="Proteomes" id="UP000001939">
    <property type="component" value="Chromosome"/>
</dbReference>
<dbReference type="GO" id="GO:1990904">
    <property type="term" value="C:ribonucleoprotein complex"/>
    <property type="evidence" value="ECO:0007669"/>
    <property type="project" value="UniProtKB-KW"/>
</dbReference>
<dbReference type="GO" id="GO:0005840">
    <property type="term" value="C:ribosome"/>
    <property type="evidence" value="ECO:0007669"/>
    <property type="project" value="UniProtKB-KW"/>
</dbReference>
<dbReference type="GO" id="GO:0003735">
    <property type="term" value="F:structural constituent of ribosome"/>
    <property type="evidence" value="ECO:0007669"/>
    <property type="project" value="InterPro"/>
</dbReference>
<dbReference type="GO" id="GO:0006412">
    <property type="term" value="P:translation"/>
    <property type="evidence" value="ECO:0007669"/>
    <property type="project" value="UniProtKB-UniRule"/>
</dbReference>
<dbReference type="Gene3D" id="2.30.170.40">
    <property type="entry name" value="Ribosomal protein L28/L24"/>
    <property type="match status" value="1"/>
</dbReference>
<dbReference type="HAMAP" id="MF_00373">
    <property type="entry name" value="Ribosomal_bL28"/>
    <property type="match status" value="1"/>
</dbReference>
<dbReference type="InterPro" id="IPR050096">
    <property type="entry name" value="Bacterial_rp_bL28"/>
</dbReference>
<dbReference type="InterPro" id="IPR026569">
    <property type="entry name" value="Ribosomal_bL28"/>
</dbReference>
<dbReference type="InterPro" id="IPR034704">
    <property type="entry name" value="Ribosomal_bL28/bL31-like_sf"/>
</dbReference>
<dbReference type="InterPro" id="IPR001383">
    <property type="entry name" value="Ribosomal_bL28_bact-type"/>
</dbReference>
<dbReference type="InterPro" id="IPR037147">
    <property type="entry name" value="Ribosomal_bL28_sf"/>
</dbReference>
<dbReference type="NCBIfam" id="TIGR00009">
    <property type="entry name" value="L28"/>
    <property type="match status" value="1"/>
</dbReference>
<dbReference type="PANTHER" id="PTHR39080">
    <property type="entry name" value="50S RIBOSOMAL PROTEIN L28"/>
    <property type="match status" value="1"/>
</dbReference>
<dbReference type="PANTHER" id="PTHR39080:SF1">
    <property type="entry name" value="LARGE RIBOSOMAL SUBUNIT PROTEIN BL28A"/>
    <property type="match status" value="1"/>
</dbReference>
<dbReference type="Pfam" id="PF00830">
    <property type="entry name" value="Ribosomal_L28"/>
    <property type="match status" value="1"/>
</dbReference>
<dbReference type="SUPFAM" id="SSF143800">
    <property type="entry name" value="L28p-like"/>
    <property type="match status" value="1"/>
</dbReference>
<reference key="1">
    <citation type="journal article" date="2006" name="Lancet">
        <title>Complete genome sequence of USA300, an epidemic clone of community-acquired meticillin-resistant Staphylococcus aureus.</title>
        <authorList>
            <person name="Diep B.A."/>
            <person name="Gill S.R."/>
            <person name="Chang R.F."/>
            <person name="Phan T.H."/>
            <person name="Chen J.H."/>
            <person name="Davidson M.G."/>
            <person name="Lin F."/>
            <person name="Lin J."/>
            <person name="Carleton H.A."/>
            <person name="Mongodin E.F."/>
            <person name="Sensabaugh G.F."/>
            <person name="Perdreau-Remington F."/>
        </authorList>
    </citation>
    <scope>NUCLEOTIDE SEQUENCE [LARGE SCALE GENOMIC DNA]</scope>
    <source>
        <strain>USA300</strain>
    </source>
</reference>
<comment type="similarity">
    <text evidence="1">Belongs to the bacterial ribosomal protein bL28 family.</text>
</comment>
<gene>
    <name evidence="1" type="primary">rpmB</name>
    <name type="ordered locus">SAUSA300_1117</name>
</gene>
<protein>
    <recommendedName>
        <fullName evidence="1">Large ribosomal subunit protein bL28</fullName>
    </recommendedName>
    <alternativeName>
        <fullName evidence="3">50S ribosomal protein L28</fullName>
    </alternativeName>
</protein>
<accession>Q2FHL4</accession>